<dbReference type="EMBL" id="BA000022">
    <property type="protein sequence ID" value="BAA17230.1"/>
    <property type="molecule type" value="Genomic_DNA"/>
</dbReference>
<dbReference type="PIR" id="S75316">
    <property type="entry name" value="S75316"/>
</dbReference>
<dbReference type="PDB" id="3NPH">
    <property type="method" value="X-ray"/>
    <property type="resolution" value="1.85 A"/>
    <property type="chains" value="B=19-157"/>
</dbReference>
<dbReference type="PDB" id="7SC8">
    <property type="method" value="EM"/>
    <property type="resolution" value="2.10 A"/>
    <property type="chains" value="BM=1-273"/>
</dbReference>
<dbReference type="PDB" id="7SCA">
    <property type="method" value="EM"/>
    <property type="resolution" value="2.10 A"/>
    <property type="chains" value="BM=1-273"/>
</dbReference>
<dbReference type="PDB" id="8HFQ">
    <property type="method" value="EM"/>
    <property type="resolution" value="2.64 A"/>
    <property type="chains" value="l=1-273"/>
</dbReference>
<dbReference type="PDB" id="8TO5">
    <property type="method" value="EM"/>
    <property type="resolution" value="1.87 A"/>
    <property type="chains" value="c=1-273"/>
</dbReference>
<dbReference type="PDB" id="8TRO">
    <property type="method" value="EM"/>
    <property type="resolution" value="1.90 A"/>
    <property type="chains" value="c=1-273"/>
</dbReference>
<dbReference type="PDBsum" id="3NPH"/>
<dbReference type="PDBsum" id="7SC8"/>
<dbReference type="PDBsum" id="7SCA"/>
<dbReference type="PDBsum" id="8HFQ"/>
<dbReference type="PDBsum" id="8TO5"/>
<dbReference type="PDBsum" id="8TRO"/>
<dbReference type="EMDB" id="EMD-25029"/>
<dbReference type="EMDB" id="EMD-25031"/>
<dbReference type="EMDB" id="EMD-34724"/>
<dbReference type="EMDB" id="EMD-41435"/>
<dbReference type="EMDB" id="EMD-41585"/>
<dbReference type="SMR" id="P73204"/>
<dbReference type="IntAct" id="P73204">
    <property type="interactions" value="2"/>
</dbReference>
<dbReference type="STRING" id="1148.gene:10498093"/>
<dbReference type="PaxDb" id="1148-1652307"/>
<dbReference type="EnsemblBacteria" id="BAA17230">
    <property type="protein sequence ID" value="BAA17230"/>
    <property type="gene ID" value="BAA17230"/>
</dbReference>
<dbReference type="KEGG" id="syn:sll1579"/>
<dbReference type="eggNOG" id="COG0237">
    <property type="taxonomic scope" value="Bacteria"/>
</dbReference>
<dbReference type="InParanoid" id="P73204"/>
<dbReference type="PhylomeDB" id="P73204"/>
<dbReference type="EvolutionaryTrace" id="P73204"/>
<dbReference type="Proteomes" id="UP000001425">
    <property type="component" value="Chromosome"/>
</dbReference>
<dbReference type="GO" id="GO:0030089">
    <property type="term" value="C:phycobilisome"/>
    <property type="evidence" value="ECO:0007669"/>
    <property type="project" value="UniProtKB-KW"/>
</dbReference>
<dbReference type="GO" id="GO:0031676">
    <property type="term" value="C:plasma membrane-derived thylakoid membrane"/>
    <property type="evidence" value="ECO:0007669"/>
    <property type="project" value="UniProtKB-SubCell"/>
</dbReference>
<dbReference type="GO" id="GO:0015979">
    <property type="term" value="P:photosynthesis"/>
    <property type="evidence" value="ECO:0007669"/>
    <property type="project" value="UniProtKB-KW"/>
</dbReference>
<dbReference type="Gene3D" id="1.10.3130.20">
    <property type="entry name" value="Phycobilisome linker domain"/>
    <property type="match status" value="1"/>
</dbReference>
<dbReference type="InterPro" id="IPR008213">
    <property type="entry name" value="CpcD-like_dom"/>
</dbReference>
<dbReference type="InterPro" id="IPR001297">
    <property type="entry name" value="PBS_linker_dom"/>
</dbReference>
<dbReference type="InterPro" id="IPR038255">
    <property type="entry name" value="PBS_linker_sf"/>
</dbReference>
<dbReference type="InterPro" id="IPR016470">
    <property type="entry name" value="Phycobilisome"/>
</dbReference>
<dbReference type="PANTHER" id="PTHR34011:SF6">
    <property type="entry name" value="PHYCOBILIPROTEIN APCE"/>
    <property type="match status" value="1"/>
</dbReference>
<dbReference type="PANTHER" id="PTHR34011">
    <property type="entry name" value="PHYCOBILISOME 32.1 KDA LINKER POLYPEPTIDE, PHYCOCYANIN-ASSOCIATED, ROD 2-RELATED"/>
    <property type="match status" value="1"/>
</dbReference>
<dbReference type="Pfam" id="PF01383">
    <property type="entry name" value="CpcD"/>
    <property type="match status" value="1"/>
</dbReference>
<dbReference type="Pfam" id="PF00427">
    <property type="entry name" value="PBS_linker_poly"/>
    <property type="match status" value="1"/>
</dbReference>
<dbReference type="PIRSF" id="PIRSF005898">
    <property type="entry name" value="Phycobilisome_CpeC/CpcI"/>
    <property type="match status" value="1"/>
</dbReference>
<dbReference type="SMART" id="SM01094">
    <property type="entry name" value="CpcD"/>
    <property type="match status" value="1"/>
</dbReference>
<dbReference type="PROSITE" id="PS51441">
    <property type="entry name" value="CPCD_LIKE"/>
    <property type="match status" value="1"/>
</dbReference>
<dbReference type="PROSITE" id="PS51445">
    <property type="entry name" value="PBS_LINKER"/>
    <property type="match status" value="1"/>
</dbReference>
<organism>
    <name type="scientific">Synechocystis sp. (strain ATCC 27184 / PCC 6803 / Kazusa)</name>
    <dbReference type="NCBI Taxonomy" id="1111708"/>
    <lineage>
        <taxon>Bacteria</taxon>
        <taxon>Bacillati</taxon>
        <taxon>Cyanobacteriota</taxon>
        <taxon>Cyanophyceae</taxon>
        <taxon>Synechococcales</taxon>
        <taxon>Merismopediaceae</taxon>
        <taxon>Synechocystis</taxon>
    </lineage>
</organism>
<keyword id="KW-0002">3D-structure</keyword>
<keyword id="KW-0042">Antenna complex</keyword>
<keyword id="KW-0472">Membrane</keyword>
<keyword id="KW-0602">Photosynthesis</keyword>
<keyword id="KW-0605">Phycobilisome</keyword>
<keyword id="KW-1185">Reference proteome</keyword>
<keyword id="KW-0793">Thylakoid</keyword>
<accession>P73204</accession>
<protein>
    <recommendedName>
        <fullName>Phycobilisome 32.1 kDa linker polypeptide, phycocyanin-associated, rod 2</fullName>
    </recommendedName>
    <alternativeName>
        <fullName evidence="6">LR30</fullName>
    </alternativeName>
</protein>
<comment type="function">
    <text>Rod linker protein, associated with phycocyanin. Linker polypeptides determine the state of aggregation and the location of the disk-shaped phycobiliprotein units within the phycobilisome and modulate their spectroscopic properties in order to mediate a directed and optimal energy transfer.</text>
</comment>
<comment type="subunit">
    <text evidence="4 5">Part of 2 PBS rod complexes, the conventional CpcG-PBS rod and a photosystem I-specific CpcL-PBS rod, both of which include ferredoxin--NADP reductase (petH). CpcG-PBS has on average 3 stacked phycocyanin hexamers (PC, CpcA and CpcB). Linker CpcG connects the PC stack to the thylakoid, the hexamers are linked by 1 copy of CpcC1, 1 copy of CpcC2 and the stack is terminated by a single copy of CpcD. The CpcL-PBS has on average 5 stacked phycocyanin hexamers (PC, CpcA and CpcB). Linker CpcL connects the PC stack to the thylakoid, the hexamers are linked by 1 copy of CpcC1, 3 copies of CpcC2 and the stack is terminated by a single copy of CpcD (PubMed:31015331). Interacts with the C-phycocyanin (PC) beta subunit (cpcB), it may fit into the center of the PC hexamer (PubMed:21923764).</text>
</comment>
<comment type="subcellular location">
    <subcellularLocation>
        <location evidence="1">Cellular thylakoid membrane</location>
        <topology evidence="1">Peripheral membrane protein</topology>
        <orientation evidence="1">Cytoplasmic side</orientation>
    </subcellularLocation>
    <text evidence="5 7">This protein occurs in the rod, it is associated with phycocyanin.</text>
</comment>
<comment type="domain">
    <text evidence="4">The N-terminal PBS-linker domain (residues 19-157 in this experiment) interacts with the C-phycocyanin beta subunit (cpcB).</text>
</comment>
<comment type="similarity">
    <text evidence="3">Belongs to the phycobilisome linker protein family.</text>
</comment>
<feature type="chain" id="PRO_0000199224" description="Phycobilisome 32.1 kDa linker polypeptide, phycocyanin-associated, rod 2">
    <location>
        <begin position="1"/>
        <end position="273"/>
    </location>
</feature>
<feature type="domain" description="PBS-linker" evidence="3">
    <location>
        <begin position="1"/>
        <end position="180"/>
    </location>
</feature>
<feature type="domain" description="CpcD-like" evidence="2">
    <location>
        <begin position="220"/>
        <end position="273"/>
    </location>
</feature>
<feature type="mutagenesis site" description="Significantly decreases interaction of PBS-linker domain with phycocyanin beta subunit (cpcB)." evidence="4">
    <original>R</original>
    <variation>E</variation>
    <location>
        <position position="26"/>
    </location>
</feature>
<feature type="mutagenesis site" description="Significantly decreases interaction of PBS-linker domain with phycocyanin beta subunit (cpcB)." evidence="4">
    <original>E</original>
    <variation>R</variation>
    <location>
        <position position="29"/>
    </location>
</feature>
<feature type="mutagenesis site" description="Significantly decreases interaction of PBS-linker domain with phycocyanin beta subunit (cpcB)." evidence="4">
    <original>E</original>
    <variation>R</variation>
    <location>
        <position position="31"/>
    </location>
</feature>
<feature type="mutagenesis site" description="Significantly decreases interaction of PBS-linker domain with phycocyanin beta subunit (cpcB)." evidence="4">
    <original>D</original>
    <variation>R</variation>
    <location>
        <position position="33"/>
    </location>
</feature>
<feature type="mutagenesis site" description="Significantly decreases interaction of PBS-linker domain with phycocyanin beta subunit (cpcB)." evidence="4">
    <original>R</original>
    <variation>E</variation>
    <location>
        <position position="41"/>
    </location>
</feature>
<feature type="mutagenesis site" description="Significantly decreases interaction of PBS-linker domain with phycocyanin beta subunit (cpcB)." evidence="4">
    <original>D</original>
    <variation>R</variation>
    <location>
        <position position="47"/>
    </location>
</feature>
<feature type="mutagenesis site" description="Significantly decreases interaction of PBS-linker domain with phycocyanin beta subunit (cpcB)." evidence="4">
    <original>H</original>
    <variation>Y</variation>
    <location>
        <position position="48"/>
    </location>
</feature>
<feature type="mutagenesis site" description="Significantly decreases interaction of PBS-linker domain with phycocyanin beta subunit (cpcB)." evidence="4">
    <original>R</original>
    <variation>E</variation>
    <location>
        <position position="54"/>
    </location>
</feature>
<feature type="mutagenesis site" description="No change in interaction of PBS-linker domain with phycocyanin beta subunit (cpcB)." evidence="4">
    <original>E</original>
    <variation>R</variation>
    <location>
        <position position="80"/>
    </location>
</feature>
<feature type="mutagenesis site" description="No change in interaction of PBS-linker domain with phycocyanin beta subunit (cpcB)." evidence="4">
    <original>E</original>
    <variation>R</variation>
    <location>
        <position position="141"/>
    </location>
</feature>
<feature type="strand" evidence="9">
    <location>
        <begin position="25"/>
        <end position="27"/>
    </location>
</feature>
<feature type="helix" evidence="9">
    <location>
        <begin position="30"/>
        <end position="44"/>
    </location>
</feature>
<feature type="turn" evidence="9">
    <location>
        <begin position="51"/>
        <end position="53"/>
    </location>
</feature>
<feature type="helix" evidence="9">
    <location>
        <begin position="56"/>
        <end position="63"/>
    </location>
</feature>
<feature type="helix" evidence="9">
    <location>
        <begin position="69"/>
        <end position="77"/>
    </location>
</feature>
<feature type="helix" evidence="9">
    <location>
        <begin position="80"/>
        <end position="86"/>
    </location>
</feature>
<feature type="turn" evidence="9">
    <location>
        <begin position="87"/>
        <end position="89"/>
    </location>
</feature>
<feature type="helix" evidence="9">
    <location>
        <begin position="92"/>
        <end position="103"/>
    </location>
</feature>
<feature type="strand" evidence="9">
    <location>
        <begin position="104"/>
        <end position="106"/>
    </location>
</feature>
<feature type="helix" evidence="9">
    <location>
        <begin position="111"/>
        <end position="124"/>
    </location>
</feature>
<feature type="helix" evidence="9">
    <location>
        <begin position="126"/>
        <end position="134"/>
    </location>
</feature>
<feature type="helix" evidence="9">
    <location>
        <begin position="137"/>
        <end position="142"/>
    </location>
</feature>
<feature type="turn" evidence="9">
    <location>
        <begin position="143"/>
        <end position="146"/>
    </location>
</feature>
<evidence type="ECO:0000250" key="1"/>
<evidence type="ECO:0000255" key="2">
    <source>
        <dbReference type="PROSITE-ProRule" id="PRU00771"/>
    </source>
</evidence>
<evidence type="ECO:0000255" key="3">
    <source>
        <dbReference type="PROSITE-ProRule" id="PRU00775"/>
    </source>
</evidence>
<evidence type="ECO:0000269" key="4">
    <source>
    </source>
</evidence>
<evidence type="ECO:0000269" key="5">
    <source>
    </source>
</evidence>
<evidence type="ECO:0000303" key="6">
    <source>
    </source>
</evidence>
<evidence type="ECO:0000305" key="7">
    <source>
    </source>
</evidence>
<evidence type="ECO:0007744" key="8">
    <source>
        <dbReference type="PDB" id="3NPH"/>
    </source>
</evidence>
<evidence type="ECO:0007829" key="9">
    <source>
        <dbReference type="PDB" id="3NPH"/>
    </source>
</evidence>
<gene>
    <name type="primary">cpcC2</name>
    <name type="ordered locus">sll1579</name>
</gene>
<name>PYR2_SYNY3</name>
<sequence length="273" mass="30797">MTSLVSAQRLGIVAVDEAIPLELRSRSTEEEVDAVILAVYRQVLGNDHLMSQERLTSAESLLRGREISVRDFVRAVALSEVYRQKFFHSNPQNRFIELNYKHLLGRAPYDQSEIAFHTDLYHQGGYEAEINSYIDSVEYTENFGDWVVPYFRGFATQRNQKTVGFSRSFQVYRGYATSDRSQGNGSRSRLTRELARNTASPVYAGSTAESLRGTSAGSRNQMYRLQVIQGAAPGRGTRVRRGKAEYLVSYDNLSAKLQQINRQGDTVTMISLA</sequence>
<proteinExistence type="evidence at protein level"/>
<reference key="1">
    <citation type="journal article" date="1996" name="DNA Res.">
        <title>Sequence analysis of the genome of the unicellular cyanobacterium Synechocystis sp. strain PCC6803. II. Sequence determination of the entire genome and assignment of potential protein-coding regions.</title>
        <authorList>
            <person name="Kaneko T."/>
            <person name="Sato S."/>
            <person name="Kotani H."/>
            <person name="Tanaka A."/>
            <person name="Asamizu E."/>
            <person name="Nakamura Y."/>
            <person name="Miyajima N."/>
            <person name="Hirosawa M."/>
            <person name="Sugiura M."/>
            <person name="Sasamoto S."/>
            <person name="Kimura T."/>
            <person name="Hosouchi T."/>
            <person name="Matsuno A."/>
            <person name="Muraki A."/>
            <person name="Nakazaki N."/>
            <person name="Naruo K."/>
            <person name="Okumura S."/>
            <person name="Shimpo S."/>
            <person name="Takeuchi C."/>
            <person name="Wada T."/>
            <person name="Watanabe A."/>
            <person name="Yamada M."/>
            <person name="Yasuda M."/>
            <person name="Tabata S."/>
        </authorList>
    </citation>
    <scope>NUCLEOTIDE SEQUENCE [LARGE SCALE GENOMIC DNA]</scope>
    <source>
        <strain>ATCC 27184 / PCC 6803 / Kazusa</strain>
    </source>
</reference>
<reference key="2">
    <citation type="journal article" date="2019" name="MBio">
        <title>Phycobilisomes Harbor FNRL in Cyanobacteria.</title>
        <authorList>
            <person name="Liu H."/>
            <person name="Weisz D.A."/>
            <person name="Zhang M.M."/>
            <person name="Cheng M."/>
            <person name="Zhang B."/>
            <person name="Zhang H."/>
            <person name="Gerstenecker G.S."/>
            <person name="Pakrasi H.B."/>
            <person name="Gross M.L."/>
            <person name="Blankenship R.E."/>
        </authorList>
    </citation>
    <scope>SUBUNIT</scope>
    <scope>SUBCELLULAR LOCATION</scope>
    <source>
        <strain>ATCC 27184 / PCC 6803 / Kazusa</strain>
    </source>
</reference>
<reference evidence="8" key="3">
    <citation type="journal article" date="2011" name="Mol. Microbiol.">
        <title>Crystal structure of the N-terminal domain of linker L(R) and the assembly of cyanobacterial phycobilisome rods.</title>
        <authorList>
            <person name="Gao X."/>
            <person name="Zhang N."/>
            <person name="Wei T.D."/>
            <person name="Su H.N."/>
            <person name="Xie B.B."/>
            <person name="Dong C.C."/>
            <person name="Zhang X.Y."/>
            <person name="Chen X.L."/>
            <person name="Zhou B.C."/>
            <person name="Wang Z.X."/>
            <person name="Wu J.W."/>
            <person name="Zhang Y.Z."/>
        </authorList>
    </citation>
    <scope>X-RAY CRYSTALLOGRAPHY (1.85 ANGSTROMS) OF 19-157</scope>
    <scope>INTERACTION WITH PHYCOCYANIN BETA SUBUNIT</scope>
    <scope>SUBUNIT</scope>
    <scope>DOMAIN</scope>
    <scope>MUTAGENESIS OF ARG-26; GLU-29; GLU-31; ASP-33; ARG-41; ASP-47; HIS-48; ARG-54; GLU-80 AND GLU-141</scope>
    <source>
        <strain>ATCC 27184 / PCC 6803 / Kazusa</strain>
    </source>
</reference>